<comment type="similarity">
    <text evidence="1">Belongs to the UPF0434 family.</text>
</comment>
<accession>A6T171</accession>
<dbReference type="EMBL" id="CP000269">
    <property type="protein sequence ID" value="ABR91774.1"/>
    <property type="molecule type" value="Genomic_DNA"/>
</dbReference>
<dbReference type="RefSeq" id="WP_012080430.1">
    <property type="nucleotide sequence ID" value="NC_009659.1"/>
</dbReference>
<dbReference type="SMR" id="A6T171"/>
<dbReference type="STRING" id="375286.mma_2578"/>
<dbReference type="KEGG" id="mms:mma_2578"/>
<dbReference type="eggNOG" id="COG2835">
    <property type="taxonomic scope" value="Bacteria"/>
</dbReference>
<dbReference type="HOGENOM" id="CLU_155659_3_0_4"/>
<dbReference type="OrthoDB" id="9812205at2"/>
<dbReference type="Proteomes" id="UP000006388">
    <property type="component" value="Chromosome"/>
</dbReference>
<dbReference type="GO" id="GO:0005829">
    <property type="term" value="C:cytosol"/>
    <property type="evidence" value="ECO:0007669"/>
    <property type="project" value="TreeGrafter"/>
</dbReference>
<dbReference type="FunFam" id="2.20.25.10:FF:000002">
    <property type="entry name" value="UPF0434 protein YcaR"/>
    <property type="match status" value="1"/>
</dbReference>
<dbReference type="Gene3D" id="2.20.25.10">
    <property type="match status" value="1"/>
</dbReference>
<dbReference type="HAMAP" id="MF_01187">
    <property type="entry name" value="UPF0434"/>
    <property type="match status" value="1"/>
</dbReference>
<dbReference type="InterPro" id="IPR005651">
    <property type="entry name" value="Trm112-like"/>
</dbReference>
<dbReference type="PANTHER" id="PTHR33505:SF4">
    <property type="entry name" value="PROTEIN PREY, MITOCHONDRIAL"/>
    <property type="match status" value="1"/>
</dbReference>
<dbReference type="PANTHER" id="PTHR33505">
    <property type="entry name" value="ZGC:162634"/>
    <property type="match status" value="1"/>
</dbReference>
<dbReference type="Pfam" id="PF03966">
    <property type="entry name" value="Trm112p"/>
    <property type="match status" value="1"/>
</dbReference>
<dbReference type="SUPFAM" id="SSF158997">
    <property type="entry name" value="Trm112p-like"/>
    <property type="match status" value="1"/>
</dbReference>
<feature type="chain" id="PRO_1000065844" description="UPF0434 protein mma_2578">
    <location>
        <begin position="1"/>
        <end position="60"/>
    </location>
</feature>
<gene>
    <name type="ordered locus">mma_2578</name>
</gene>
<protein>
    <recommendedName>
        <fullName evidence="1">UPF0434 protein mma_2578</fullName>
    </recommendedName>
</protein>
<reference key="1">
    <citation type="journal article" date="2007" name="PLoS Genet.">
        <title>Genome analysis of Minibacterium massiliensis highlights the convergent evolution of water-living bacteria.</title>
        <authorList>
            <person name="Audic S."/>
            <person name="Robert C."/>
            <person name="Campagna B."/>
            <person name="Parinello H."/>
            <person name="Claverie J.-M."/>
            <person name="Raoult D."/>
            <person name="Drancourt M."/>
        </authorList>
    </citation>
    <scope>NUCLEOTIDE SEQUENCE [LARGE SCALE GENOMIC DNA]</scope>
    <source>
        <strain>Marseille</strain>
    </source>
</reference>
<evidence type="ECO:0000255" key="1">
    <source>
        <dbReference type="HAMAP-Rule" id="MF_01187"/>
    </source>
</evidence>
<sequence>MDARLLDILVCPICKGPLEHDKKAQELICKADKLAYPIRDGIPIMWADQARDLQVTPGTN</sequence>
<proteinExistence type="inferred from homology"/>
<name>Y2578_JANMA</name>
<organism>
    <name type="scientific">Janthinobacterium sp. (strain Marseille)</name>
    <name type="common">Minibacterium massiliensis</name>
    <dbReference type="NCBI Taxonomy" id="375286"/>
    <lineage>
        <taxon>Bacteria</taxon>
        <taxon>Pseudomonadati</taxon>
        <taxon>Pseudomonadota</taxon>
        <taxon>Betaproteobacteria</taxon>
        <taxon>Burkholderiales</taxon>
        <taxon>Oxalobacteraceae</taxon>
        <taxon>Janthinobacterium</taxon>
    </lineage>
</organism>